<gene>
    <name evidence="1" type="primary">bioD</name>
    <name type="ordered locus">BC_4118</name>
</gene>
<accession>Q818W9</accession>
<protein>
    <recommendedName>
        <fullName evidence="1">ATP-dependent dethiobiotin synthetase BioD</fullName>
        <ecNumber evidence="1">6.3.3.3</ecNumber>
    </recommendedName>
    <alternativeName>
        <fullName evidence="1">DTB synthetase</fullName>
        <shortName evidence="1">DTBS</shortName>
    </alternativeName>
    <alternativeName>
        <fullName evidence="1">Dethiobiotin synthase</fullName>
    </alternativeName>
</protein>
<evidence type="ECO:0000255" key="1">
    <source>
        <dbReference type="HAMAP-Rule" id="MF_00336"/>
    </source>
</evidence>
<comment type="function">
    <text evidence="1">Catalyzes a mechanistically unusual reaction, the ATP-dependent insertion of CO2 between the N7 and N8 nitrogen atoms of 7,8-diaminopelargonic acid (DAPA, also called 7,8-diammoniononanoate) to form a ureido ring.</text>
</comment>
<comment type="catalytic activity">
    <reaction evidence="1">
        <text>(7R,8S)-7,8-diammoniononanoate + CO2 + ATP = (4R,5S)-dethiobiotin + ADP + phosphate + 3 H(+)</text>
        <dbReference type="Rhea" id="RHEA:15805"/>
        <dbReference type="ChEBI" id="CHEBI:15378"/>
        <dbReference type="ChEBI" id="CHEBI:16526"/>
        <dbReference type="ChEBI" id="CHEBI:30616"/>
        <dbReference type="ChEBI" id="CHEBI:43474"/>
        <dbReference type="ChEBI" id="CHEBI:149469"/>
        <dbReference type="ChEBI" id="CHEBI:149473"/>
        <dbReference type="ChEBI" id="CHEBI:456216"/>
        <dbReference type="EC" id="6.3.3.3"/>
    </reaction>
</comment>
<comment type="cofactor">
    <cofactor evidence="1">
        <name>Mg(2+)</name>
        <dbReference type="ChEBI" id="CHEBI:18420"/>
    </cofactor>
</comment>
<comment type="pathway">
    <text evidence="1">Cofactor biosynthesis; biotin biosynthesis; biotin from 7,8-diaminononanoate: step 1/2.</text>
</comment>
<comment type="subunit">
    <text evidence="1">Homodimer.</text>
</comment>
<comment type="subcellular location">
    <subcellularLocation>
        <location evidence="1">Cytoplasm</location>
    </subcellularLocation>
</comment>
<comment type="similarity">
    <text evidence="1">Belongs to the dethiobiotin synthetase family.</text>
</comment>
<sequence>MSGFFITATDTEVGKTVVAGAIAGVFRELGYNVGVYKPLQSGHVASNPEGDAARLKSLSGVPTQENEICPYSIEEPLAPRLAMKRAGRVVKLKEITDYYNGLLKEFNSLFVEGAGGLAVPYTEDALVIDFAKELQLPLIVVARPTLGTVNHTVLTIAYAKAHGLTVAGVILSGCKECEMERVQENKEMIEELSGVPVLGLLPFFAGEFTKEEVLESAKEHIMISKLEEFIQNESNVAGAPSM</sequence>
<dbReference type="EC" id="6.3.3.3" evidence="1"/>
<dbReference type="EMBL" id="AE016877">
    <property type="protein sequence ID" value="AAP11037.1"/>
    <property type="molecule type" value="Genomic_DNA"/>
</dbReference>
<dbReference type="RefSeq" id="NP_833836.1">
    <property type="nucleotide sequence ID" value="NC_004722.1"/>
</dbReference>
<dbReference type="RefSeq" id="WP_000012476.1">
    <property type="nucleotide sequence ID" value="NZ_CP138336.1"/>
</dbReference>
<dbReference type="SMR" id="Q818W9"/>
<dbReference type="STRING" id="226900.BC_4118"/>
<dbReference type="KEGG" id="bce:BC4118"/>
<dbReference type="PATRIC" id="fig|226900.8.peg.4254"/>
<dbReference type="HOGENOM" id="CLU_072551_3_1_9"/>
<dbReference type="OrthoDB" id="9802097at2"/>
<dbReference type="UniPathway" id="UPA00078">
    <property type="reaction ID" value="UER00161"/>
</dbReference>
<dbReference type="Proteomes" id="UP000001417">
    <property type="component" value="Chromosome"/>
</dbReference>
<dbReference type="GO" id="GO:0005829">
    <property type="term" value="C:cytosol"/>
    <property type="evidence" value="ECO:0000318"/>
    <property type="project" value="GO_Central"/>
</dbReference>
<dbReference type="GO" id="GO:0005524">
    <property type="term" value="F:ATP binding"/>
    <property type="evidence" value="ECO:0007669"/>
    <property type="project" value="UniProtKB-UniRule"/>
</dbReference>
<dbReference type="GO" id="GO:0004141">
    <property type="term" value="F:dethiobiotin synthase activity"/>
    <property type="evidence" value="ECO:0000318"/>
    <property type="project" value="GO_Central"/>
</dbReference>
<dbReference type="GO" id="GO:0000287">
    <property type="term" value="F:magnesium ion binding"/>
    <property type="evidence" value="ECO:0007669"/>
    <property type="project" value="UniProtKB-UniRule"/>
</dbReference>
<dbReference type="GO" id="GO:0009102">
    <property type="term" value="P:biotin biosynthetic process"/>
    <property type="evidence" value="ECO:0000318"/>
    <property type="project" value="GO_Central"/>
</dbReference>
<dbReference type="CDD" id="cd03109">
    <property type="entry name" value="DTBS"/>
    <property type="match status" value="1"/>
</dbReference>
<dbReference type="FunFam" id="3.40.50.300:FF:001212">
    <property type="entry name" value="ATP-dependent dethiobiotin synthetase BioD"/>
    <property type="match status" value="1"/>
</dbReference>
<dbReference type="Gene3D" id="3.40.50.300">
    <property type="entry name" value="P-loop containing nucleotide triphosphate hydrolases"/>
    <property type="match status" value="1"/>
</dbReference>
<dbReference type="HAMAP" id="MF_00336">
    <property type="entry name" value="BioD"/>
    <property type="match status" value="1"/>
</dbReference>
<dbReference type="InterPro" id="IPR004472">
    <property type="entry name" value="DTB_synth_BioD"/>
</dbReference>
<dbReference type="InterPro" id="IPR027417">
    <property type="entry name" value="P-loop_NTPase"/>
</dbReference>
<dbReference type="NCBIfam" id="TIGR00347">
    <property type="entry name" value="bioD"/>
    <property type="match status" value="1"/>
</dbReference>
<dbReference type="PANTHER" id="PTHR43210:SF2">
    <property type="entry name" value="ATP-DEPENDENT DETHIOBIOTIN SYNTHETASE BIOD 2"/>
    <property type="match status" value="1"/>
</dbReference>
<dbReference type="PANTHER" id="PTHR43210">
    <property type="entry name" value="DETHIOBIOTIN SYNTHETASE"/>
    <property type="match status" value="1"/>
</dbReference>
<dbReference type="Pfam" id="PF13500">
    <property type="entry name" value="AAA_26"/>
    <property type="match status" value="1"/>
</dbReference>
<dbReference type="PIRSF" id="PIRSF006755">
    <property type="entry name" value="DTB_synth"/>
    <property type="match status" value="1"/>
</dbReference>
<dbReference type="SUPFAM" id="SSF52540">
    <property type="entry name" value="P-loop containing nucleoside triphosphate hydrolases"/>
    <property type="match status" value="1"/>
</dbReference>
<feature type="chain" id="PRO_0000302476" description="ATP-dependent dethiobiotin synthetase BioD">
    <location>
        <begin position="1"/>
        <end position="242"/>
    </location>
</feature>
<feature type="active site" evidence="1">
    <location>
        <position position="37"/>
    </location>
</feature>
<feature type="binding site" evidence="1">
    <location>
        <begin position="12"/>
        <end position="17"/>
    </location>
    <ligand>
        <name>ATP</name>
        <dbReference type="ChEBI" id="CHEBI:30616"/>
    </ligand>
</feature>
<feature type="binding site" evidence="1">
    <location>
        <position position="16"/>
    </location>
    <ligand>
        <name>Mg(2+)</name>
        <dbReference type="ChEBI" id="CHEBI:18420"/>
    </ligand>
</feature>
<feature type="binding site" evidence="1">
    <location>
        <position position="41"/>
    </location>
    <ligand>
        <name>substrate</name>
    </ligand>
</feature>
<feature type="binding site" evidence="1">
    <location>
        <position position="51"/>
    </location>
    <ligand>
        <name>ATP</name>
        <dbReference type="ChEBI" id="CHEBI:30616"/>
    </ligand>
</feature>
<feature type="binding site" evidence="1">
    <location>
        <position position="51"/>
    </location>
    <ligand>
        <name>Mg(2+)</name>
        <dbReference type="ChEBI" id="CHEBI:18420"/>
    </ligand>
</feature>
<feature type="binding site" evidence="1">
    <location>
        <begin position="112"/>
        <end position="115"/>
    </location>
    <ligand>
        <name>ATP</name>
        <dbReference type="ChEBI" id="CHEBI:30616"/>
    </ligand>
</feature>
<feature type="binding site" evidence="1">
    <location>
        <position position="112"/>
    </location>
    <ligand>
        <name>Mg(2+)</name>
        <dbReference type="ChEBI" id="CHEBI:18420"/>
    </ligand>
</feature>
<reference key="1">
    <citation type="journal article" date="2003" name="Nature">
        <title>Genome sequence of Bacillus cereus and comparative analysis with Bacillus anthracis.</title>
        <authorList>
            <person name="Ivanova N."/>
            <person name="Sorokin A."/>
            <person name="Anderson I."/>
            <person name="Galleron N."/>
            <person name="Candelon B."/>
            <person name="Kapatral V."/>
            <person name="Bhattacharyya A."/>
            <person name="Reznik G."/>
            <person name="Mikhailova N."/>
            <person name="Lapidus A."/>
            <person name="Chu L."/>
            <person name="Mazur M."/>
            <person name="Goltsman E."/>
            <person name="Larsen N."/>
            <person name="D'Souza M."/>
            <person name="Walunas T."/>
            <person name="Grechkin Y."/>
            <person name="Pusch G."/>
            <person name="Haselkorn R."/>
            <person name="Fonstein M."/>
            <person name="Ehrlich S.D."/>
            <person name="Overbeek R."/>
            <person name="Kyrpides N.C."/>
        </authorList>
    </citation>
    <scope>NUCLEOTIDE SEQUENCE [LARGE SCALE GENOMIC DNA]</scope>
    <source>
        <strain>ATCC 14579 / DSM 31 / CCUG 7414 / JCM 2152 / NBRC 15305 / NCIMB 9373 / NCTC 2599 / NRRL B-3711</strain>
    </source>
</reference>
<keyword id="KW-0067">ATP-binding</keyword>
<keyword id="KW-0093">Biotin biosynthesis</keyword>
<keyword id="KW-0963">Cytoplasm</keyword>
<keyword id="KW-0436">Ligase</keyword>
<keyword id="KW-0460">Magnesium</keyword>
<keyword id="KW-0479">Metal-binding</keyword>
<keyword id="KW-0547">Nucleotide-binding</keyword>
<keyword id="KW-1185">Reference proteome</keyword>
<organism>
    <name type="scientific">Bacillus cereus (strain ATCC 14579 / DSM 31 / CCUG 7414 / JCM 2152 / NBRC 15305 / NCIMB 9373 / NCTC 2599 / NRRL B-3711)</name>
    <dbReference type="NCBI Taxonomy" id="226900"/>
    <lineage>
        <taxon>Bacteria</taxon>
        <taxon>Bacillati</taxon>
        <taxon>Bacillota</taxon>
        <taxon>Bacilli</taxon>
        <taxon>Bacillales</taxon>
        <taxon>Bacillaceae</taxon>
        <taxon>Bacillus</taxon>
        <taxon>Bacillus cereus group</taxon>
    </lineage>
</organism>
<proteinExistence type="inferred from homology"/>
<name>BIOD_BACCR</name>